<feature type="chain" id="PRO_1000205484" description="DNA replication and repair protein RecF">
    <location>
        <begin position="1"/>
        <end position="372"/>
    </location>
</feature>
<feature type="binding site" evidence="1">
    <location>
        <begin position="30"/>
        <end position="37"/>
    </location>
    <ligand>
        <name>ATP</name>
        <dbReference type="ChEBI" id="CHEBI:30616"/>
    </ligand>
</feature>
<evidence type="ECO:0000255" key="1">
    <source>
        <dbReference type="HAMAP-Rule" id="MF_00365"/>
    </source>
</evidence>
<accession>C4KZZ0</accession>
<keyword id="KW-0067">ATP-binding</keyword>
<keyword id="KW-0963">Cytoplasm</keyword>
<keyword id="KW-0227">DNA damage</keyword>
<keyword id="KW-0234">DNA repair</keyword>
<keyword id="KW-0235">DNA replication</keyword>
<keyword id="KW-0238">DNA-binding</keyword>
<keyword id="KW-0547">Nucleotide-binding</keyword>
<keyword id="KW-0742">SOS response</keyword>
<sequence>MHLKSIRLQNYRNYETLELDFSEQTNVLIGENAQGKTNLLESIYVLALAKSHRTTQDRELIGWEADAASIEGRIHKRTGESVQSLSFSPKGKKAKLNHLEQRRLSDYVGAFNVVLFAPEDLAIVKGSPQGRRRFLDMEIGQVSPVYLHELNQYLKTLKQRNALLKQLSTKGGDETLLEVLTDQLIELAVKIVMRRYHFIDQLEKWANPIHSGITRDLETLTIQYVSDTFQKERFSKEQMFETYRQKFDKIRENERRRGVTLFGPHRDDFELYVNNRNVQTFGSQGQQRTAALSLKLAEIELIHEEVGEYPLLLLDDVLSELDDHRQTHLLDTMGRKVQTILTTTNIDGIAHETIQQAKVFHVKQGEVETESV</sequence>
<comment type="function">
    <text evidence="1">The RecF protein is involved in DNA metabolism; it is required for DNA replication and normal SOS inducibility. RecF binds preferentially to single-stranded, linear DNA. It also seems to bind ATP.</text>
</comment>
<comment type="subcellular location">
    <subcellularLocation>
        <location evidence="1">Cytoplasm</location>
    </subcellularLocation>
</comment>
<comment type="similarity">
    <text evidence="1">Belongs to the RecF family.</text>
</comment>
<dbReference type="EMBL" id="CP001615">
    <property type="protein sequence ID" value="ACQ70653.1"/>
    <property type="molecule type" value="Genomic_DNA"/>
</dbReference>
<dbReference type="RefSeq" id="WP_015880212.1">
    <property type="nucleotide sequence ID" value="NC_012673.1"/>
</dbReference>
<dbReference type="SMR" id="C4KZZ0"/>
<dbReference type="STRING" id="360911.EAT1b_1727"/>
<dbReference type="KEGG" id="eat:EAT1b_1727"/>
<dbReference type="eggNOG" id="COG1195">
    <property type="taxonomic scope" value="Bacteria"/>
</dbReference>
<dbReference type="HOGENOM" id="CLU_040267_0_1_9"/>
<dbReference type="OrthoDB" id="9803889at2"/>
<dbReference type="Proteomes" id="UP000000716">
    <property type="component" value="Chromosome"/>
</dbReference>
<dbReference type="GO" id="GO:0005737">
    <property type="term" value="C:cytoplasm"/>
    <property type="evidence" value="ECO:0007669"/>
    <property type="project" value="UniProtKB-SubCell"/>
</dbReference>
<dbReference type="GO" id="GO:0005524">
    <property type="term" value="F:ATP binding"/>
    <property type="evidence" value="ECO:0007669"/>
    <property type="project" value="UniProtKB-UniRule"/>
</dbReference>
<dbReference type="GO" id="GO:0003697">
    <property type="term" value="F:single-stranded DNA binding"/>
    <property type="evidence" value="ECO:0007669"/>
    <property type="project" value="UniProtKB-UniRule"/>
</dbReference>
<dbReference type="GO" id="GO:0006260">
    <property type="term" value="P:DNA replication"/>
    <property type="evidence" value="ECO:0007669"/>
    <property type="project" value="UniProtKB-UniRule"/>
</dbReference>
<dbReference type="GO" id="GO:0000731">
    <property type="term" value="P:DNA synthesis involved in DNA repair"/>
    <property type="evidence" value="ECO:0007669"/>
    <property type="project" value="TreeGrafter"/>
</dbReference>
<dbReference type="GO" id="GO:0006302">
    <property type="term" value="P:double-strand break repair"/>
    <property type="evidence" value="ECO:0007669"/>
    <property type="project" value="TreeGrafter"/>
</dbReference>
<dbReference type="GO" id="GO:0009432">
    <property type="term" value="P:SOS response"/>
    <property type="evidence" value="ECO:0007669"/>
    <property type="project" value="UniProtKB-UniRule"/>
</dbReference>
<dbReference type="CDD" id="cd03242">
    <property type="entry name" value="ABC_RecF"/>
    <property type="match status" value="1"/>
</dbReference>
<dbReference type="FunFam" id="1.20.1050.90:FF:000002">
    <property type="entry name" value="DNA replication and repair protein RecF"/>
    <property type="match status" value="1"/>
</dbReference>
<dbReference type="Gene3D" id="3.40.50.300">
    <property type="entry name" value="P-loop containing nucleotide triphosphate hydrolases"/>
    <property type="match status" value="1"/>
</dbReference>
<dbReference type="Gene3D" id="1.20.1050.90">
    <property type="entry name" value="RecF/RecN/SMC, N-terminal domain"/>
    <property type="match status" value="1"/>
</dbReference>
<dbReference type="HAMAP" id="MF_00365">
    <property type="entry name" value="RecF"/>
    <property type="match status" value="1"/>
</dbReference>
<dbReference type="InterPro" id="IPR001238">
    <property type="entry name" value="DNA-binding_RecF"/>
</dbReference>
<dbReference type="InterPro" id="IPR018078">
    <property type="entry name" value="DNA-binding_RecF_CS"/>
</dbReference>
<dbReference type="InterPro" id="IPR027417">
    <property type="entry name" value="P-loop_NTPase"/>
</dbReference>
<dbReference type="InterPro" id="IPR003395">
    <property type="entry name" value="RecF/RecN/SMC_N"/>
</dbReference>
<dbReference type="InterPro" id="IPR042174">
    <property type="entry name" value="RecF_2"/>
</dbReference>
<dbReference type="NCBIfam" id="TIGR00611">
    <property type="entry name" value="recf"/>
    <property type="match status" value="1"/>
</dbReference>
<dbReference type="PANTHER" id="PTHR32182">
    <property type="entry name" value="DNA REPLICATION AND REPAIR PROTEIN RECF"/>
    <property type="match status" value="1"/>
</dbReference>
<dbReference type="PANTHER" id="PTHR32182:SF0">
    <property type="entry name" value="DNA REPLICATION AND REPAIR PROTEIN RECF"/>
    <property type="match status" value="1"/>
</dbReference>
<dbReference type="Pfam" id="PF02463">
    <property type="entry name" value="SMC_N"/>
    <property type="match status" value="1"/>
</dbReference>
<dbReference type="SUPFAM" id="SSF52540">
    <property type="entry name" value="P-loop containing nucleoside triphosphate hydrolases"/>
    <property type="match status" value="1"/>
</dbReference>
<dbReference type="PROSITE" id="PS00617">
    <property type="entry name" value="RECF_1"/>
    <property type="match status" value="1"/>
</dbReference>
<dbReference type="PROSITE" id="PS00618">
    <property type="entry name" value="RECF_2"/>
    <property type="match status" value="1"/>
</dbReference>
<protein>
    <recommendedName>
        <fullName evidence="1">DNA replication and repair protein RecF</fullName>
    </recommendedName>
</protein>
<proteinExistence type="inferred from homology"/>
<gene>
    <name evidence="1" type="primary">recF</name>
    <name type="ordered locus">EAT1b_1727</name>
</gene>
<organism>
    <name type="scientific">Exiguobacterium sp. (strain ATCC BAA-1283 / AT1b)</name>
    <dbReference type="NCBI Taxonomy" id="360911"/>
    <lineage>
        <taxon>Bacteria</taxon>
        <taxon>Bacillati</taxon>
        <taxon>Bacillota</taxon>
        <taxon>Bacilli</taxon>
        <taxon>Bacillales</taxon>
        <taxon>Bacillales Family XII. Incertae Sedis</taxon>
        <taxon>Exiguobacterium</taxon>
    </lineage>
</organism>
<name>RECF_EXISA</name>
<reference key="1">
    <citation type="journal article" date="2011" name="J. Bacteriol.">
        <title>Complete genome sequence of the Thermophilic Bacterium Exiguobacterium sp. AT1b.</title>
        <authorList>
            <person name="Vishnivetskaya T.A."/>
            <person name="Lucas S."/>
            <person name="Copeland A."/>
            <person name="Lapidus A."/>
            <person name="Glavina del Rio T."/>
            <person name="Dalin E."/>
            <person name="Tice H."/>
            <person name="Bruce D.C."/>
            <person name="Goodwin L.A."/>
            <person name="Pitluck S."/>
            <person name="Saunders E."/>
            <person name="Brettin T."/>
            <person name="Detter C."/>
            <person name="Han C."/>
            <person name="Larimer F."/>
            <person name="Land M.L."/>
            <person name="Hauser L.J."/>
            <person name="Kyrpides N.C."/>
            <person name="Ovchinnikova G."/>
            <person name="Kathariou S."/>
            <person name="Ramaley R.F."/>
            <person name="Rodrigues D.F."/>
            <person name="Hendrix C."/>
            <person name="Richardson P."/>
            <person name="Tiedje J.M."/>
        </authorList>
    </citation>
    <scope>NUCLEOTIDE SEQUENCE [LARGE SCALE GENOMIC DNA]</scope>
    <source>
        <strain>ATCC BAA-1283 / AT1b</strain>
    </source>
</reference>